<sequence length="314" mass="35736">MKRSHYFIAVPLTSEAKQAISRFSGDASSSLPFRTWVHEEDYHITLAFLGDVPPGKMAPLCEAMAAVAAKSAPFSLALAGLGTFGERTAPRIFWQGVKEEAALNELRRDVYEACLSLGFSLDRRPFAPHITIARKWQGEAPFQPEALRSLPAASTVFSVPEIVLYRTNMEKTPKYETIAAFPLLGAPDGRTGEGMGQLLKLRDYISRYETDVYHYVPEFIRLKQWQWEQAKARWEAERDADGARREPGETWDFLLDKPSWWERLIGRWRRGPEPEMDEERSPAPSLSRAATLDELKWQFLDDLFELQGMPAGRL</sequence>
<name>THPR_GEOSE</name>
<accession>Q45633</accession>
<dbReference type="EC" id="3.1.4.58" evidence="1"/>
<dbReference type="EMBL" id="L13418">
    <property type="protein sequence ID" value="AAA71981.1"/>
    <property type="molecule type" value="Unassigned_DNA"/>
</dbReference>
<dbReference type="PIR" id="S43916">
    <property type="entry name" value="S43916"/>
</dbReference>
<dbReference type="SMR" id="Q45633"/>
<dbReference type="GO" id="GO:0004113">
    <property type="term" value="F:2',3'-cyclic-nucleotide 3'-phosphodiesterase activity"/>
    <property type="evidence" value="ECO:0007669"/>
    <property type="project" value="InterPro"/>
</dbReference>
<dbReference type="GO" id="GO:0008664">
    <property type="term" value="F:RNA 2',3'-cyclic 3'-phosphodiesterase activity"/>
    <property type="evidence" value="ECO:0007669"/>
    <property type="project" value="UniProtKB-EC"/>
</dbReference>
<dbReference type="Gene3D" id="3.90.1140.10">
    <property type="entry name" value="Cyclic phosphodiesterase"/>
    <property type="match status" value="1"/>
</dbReference>
<dbReference type="HAMAP" id="MF_01940">
    <property type="entry name" value="RNA_CPDase"/>
    <property type="match status" value="1"/>
</dbReference>
<dbReference type="InterPro" id="IPR009097">
    <property type="entry name" value="Cyclic_Pdiesterase"/>
</dbReference>
<dbReference type="InterPro" id="IPR014051">
    <property type="entry name" value="Phosphoesterase_HXTX"/>
</dbReference>
<dbReference type="InterPro" id="IPR004175">
    <property type="entry name" value="RNA_CPDase"/>
</dbReference>
<dbReference type="NCBIfam" id="TIGR02258">
    <property type="entry name" value="2_5_ligase"/>
    <property type="match status" value="1"/>
</dbReference>
<dbReference type="PANTHER" id="PTHR35561">
    <property type="entry name" value="RNA 2',3'-CYCLIC PHOSPHODIESTERASE"/>
    <property type="match status" value="1"/>
</dbReference>
<dbReference type="PANTHER" id="PTHR35561:SF1">
    <property type="entry name" value="RNA 2',3'-CYCLIC PHOSPHODIESTERASE"/>
    <property type="match status" value="1"/>
</dbReference>
<dbReference type="Pfam" id="PF02834">
    <property type="entry name" value="LigT_PEase"/>
    <property type="match status" value="2"/>
</dbReference>
<dbReference type="SUPFAM" id="SSF55144">
    <property type="entry name" value="LigT-like"/>
    <property type="match status" value="1"/>
</dbReference>
<keyword id="KW-0378">Hydrolase</keyword>
<reference key="1">
    <citation type="journal article" date="1994" name="Mol. Gen. Genet.">
        <title>Molecular cloning of a maltose transport gene from Bacillus stearothermophilus and its expression in Escherichia coli K-12.</title>
        <authorList>
            <person name="Liong E.C."/>
            <person name="Ferenci T."/>
        </authorList>
    </citation>
    <scope>NUCLEOTIDE SEQUENCE [GENOMIC DNA]</scope>
    <source>
        <strain>ATCC 7953 / DSM 5934 / JCM 9488 / NBRC 13737 / NCIB 8157 / NCTC 10007 / NCA 1518</strain>
    </source>
</reference>
<proteinExistence type="inferred from homology"/>
<comment type="function">
    <text evidence="1">Hydrolyzes RNA 2',3'-cyclic phosphodiester to an RNA 2'-phosphomonoester.</text>
</comment>
<comment type="catalytic activity">
    <reaction evidence="1">
        <text>a 3'-end 2',3'-cyclophospho-ribonucleotide-RNA + H2O = a 3'-end 2'-phospho-ribonucleotide-RNA + H(+)</text>
        <dbReference type="Rhea" id="RHEA:11828"/>
        <dbReference type="Rhea" id="RHEA-COMP:10464"/>
        <dbReference type="Rhea" id="RHEA-COMP:17353"/>
        <dbReference type="ChEBI" id="CHEBI:15377"/>
        <dbReference type="ChEBI" id="CHEBI:15378"/>
        <dbReference type="ChEBI" id="CHEBI:83064"/>
        <dbReference type="ChEBI" id="CHEBI:173113"/>
        <dbReference type="EC" id="3.1.4.58"/>
    </reaction>
</comment>
<comment type="similarity">
    <text evidence="1">Belongs to the 2H phosphoesterase superfamily. ThpR family.</text>
</comment>
<protein>
    <recommendedName>
        <fullName evidence="1">RNA 2',3'-cyclic phosphodiesterase</fullName>
        <shortName evidence="1">RNA 2',3'-CPDase</shortName>
        <ecNumber evidence="1">3.1.4.58</ecNumber>
    </recommendedName>
</protein>
<feature type="chain" id="PRO_0000138967" description="RNA 2',3'-cyclic phosphodiesterase">
    <location>
        <begin position="1"/>
        <end position="314"/>
    </location>
</feature>
<feature type="short sequence motif" description="HXTX 1" evidence="1">
    <location>
        <begin position="43"/>
        <end position="46"/>
    </location>
</feature>
<feature type="short sequence motif" description="HXTX 2" evidence="1">
    <location>
        <begin position="129"/>
        <end position="132"/>
    </location>
</feature>
<feature type="active site" description="Proton donor" evidence="1">
    <location>
        <position position="43"/>
    </location>
</feature>
<feature type="active site" description="Proton acceptor" evidence="1">
    <location>
        <position position="129"/>
    </location>
</feature>
<evidence type="ECO:0000255" key="1">
    <source>
        <dbReference type="HAMAP-Rule" id="MF_01940"/>
    </source>
</evidence>
<organism>
    <name type="scientific">Geobacillus stearothermophilus</name>
    <name type="common">Bacillus stearothermophilus</name>
    <dbReference type="NCBI Taxonomy" id="1422"/>
    <lineage>
        <taxon>Bacteria</taxon>
        <taxon>Bacillati</taxon>
        <taxon>Bacillota</taxon>
        <taxon>Bacilli</taxon>
        <taxon>Bacillales</taxon>
        <taxon>Anoxybacillaceae</taxon>
        <taxon>Geobacillus</taxon>
    </lineage>
</organism>